<proteinExistence type="inferred from homology"/>
<evidence type="ECO:0000255" key="1">
    <source>
        <dbReference type="HAMAP-Rule" id="MF_01346"/>
    </source>
</evidence>
<gene>
    <name evidence="1" type="primary">atpA</name>
    <name type="ordered locus">Blon_0307</name>
    <name type="ordered locus">BLIJ_0312</name>
</gene>
<reference key="1">
    <citation type="journal article" date="2008" name="Proc. Natl. Acad. Sci. U.S.A.">
        <title>The genome sequence of Bifidobacterium longum subsp. infantis reveals adaptations for milk utilization within the infant microbiome.</title>
        <authorList>
            <person name="Sela D.A."/>
            <person name="Chapman J."/>
            <person name="Adeuya A."/>
            <person name="Kim J.H."/>
            <person name="Chen F."/>
            <person name="Whitehead T.R."/>
            <person name="Lapidus A."/>
            <person name="Rokhsar D.S."/>
            <person name="Lebrilla C.B."/>
            <person name="German J.B."/>
            <person name="Price N.P."/>
            <person name="Richardson P.M."/>
            <person name="Mills D.A."/>
        </authorList>
    </citation>
    <scope>NUCLEOTIDE SEQUENCE [LARGE SCALE GENOMIC DNA]</scope>
    <source>
        <strain>ATCC 15697 / DSM 20088 / JCM 1222 / NCTC 11817 / S12</strain>
    </source>
</reference>
<reference key="2">
    <citation type="journal article" date="2011" name="Nature">
        <title>Bifidobacteria can protect from enteropathogenic infection through production of acetate.</title>
        <authorList>
            <person name="Fukuda S."/>
            <person name="Toh H."/>
            <person name="Hase K."/>
            <person name="Oshima K."/>
            <person name="Nakanishi Y."/>
            <person name="Yoshimura K."/>
            <person name="Tobe T."/>
            <person name="Clarke J.M."/>
            <person name="Topping D.L."/>
            <person name="Suzuki T."/>
            <person name="Taylor T.D."/>
            <person name="Itoh K."/>
            <person name="Kikuchi J."/>
            <person name="Morita H."/>
            <person name="Hattori M."/>
            <person name="Ohno H."/>
        </authorList>
    </citation>
    <scope>NUCLEOTIDE SEQUENCE [LARGE SCALE GENOMIC DNA]</scope>
    <source>
        <strain>ATCC 15697 / DSM 20088 / JCM 1222 / NCTC 11817 / S12</strain>
    </source>
</reference>
<sequence length="543" mass="58528">MAELTIDPASIRKALDDFVSSYKPSDTPTQEVGYVATAGDGIAHVTGLPGCMANELLTFEDGTLGLAFNLDAREIGVVILGDFAGIEEGQEVRRTGEVLSVPVGDGYLGRVVDPLGKPIDGLGEIQNIEGRRILEAQAPDVMHRHPVDEPLSTGLKAIDAMTPIGRGQRQLIIGDRQTGKTAIAIDTIINQKANWESGDPKKQVRCIYVAIGQKGSTIASVKQSLEDAGAMEYTTIVASPAADSAGFKYIAPYTGSAIGQHWMYNGKHVLIVFDDLSKQAEAYRSISLLLRRPPGREAYPGDVFYLHSRLLERCAKVSDDLGGGSMTGLPIVETKANDVSAYIPTNVISITDGQIFLQSDLFNANQRPAVDVGISVSRVGGAAQTKALKKVSGTLKISLAQYRSLESFAMFASDLDAASKAQLTRGAHLTELLKQPQFHPYSPEQEVVSVWTGTHGKLDDLDLKDVLPFEQGLLDYIDHNTDILKTIRETEEFTADTEAALDKAVDEFRSTFVSGSGKPLEEKKVESVKAAPVDQEKIVAGEK</sequence>
<keyword id="KW-0066">ATP synthesis</keyword>
<keyword id="KW-0067">ATP-binding</keyword>
<keyword id="KW-1003">Cell membrane</keyword>
<keyword id="KW-0139">CF(1)</keyword>
<keyword id="KW-0375">Hydrogen ion transport</keyword>
<keyword id="KW-0406">Ion transport</keyword>
<keyword id="KW-0472">Membrane</keyword>
<keyword id="KW-0547">Nucleotide-binding</keyword>
<keyword id="KW-1278">Translocase</keyword>
<keyword id="KW-0813">Transport</keyword>
<protein>
    <recommendedName>
        <fullName evidence="1">ATP synthase subunit alpha</fullName>
        <ecNumber evidence="1">7.1.2.2</ecNumber>
    </recommendedName>
    <alternativeName>
        <fullName evidence="1">ATP synthase F1 sector subunit alpha</fullName>
    </alternativeName>
    <alternativeName>
        <fullName evidence="1">F-ATPase subunit alpha</fullName>
    </alternativeName>
</protein>
<accession>B7GTZ1</accession>
<accession>E8MP82</accession>
<organism>
    <name type="scientific">Bifidobacterium longum subsp. infantis (strain ATCC 15697 / DSM 20088 / JCM 1222 / NCTC 11817 / S12)</name>
    <dbReference type="NCBI Taxonomy" id="391904"/>
    <lineage>
        <taxon>Bacteria</taxon>
        <taxon>Bacillati</taxon>
        <taxon>Actinomycetota</taxon>
        <taxon>Actinomycetes</taxon>
        <taxon>Bifidobacteriales</taxon>
        <taxon>Bifidobacteriaceae</taxon>
        <taxon>Bifidobacterium</taxon>
    </lineage>
</organism>
<feature type="chain" id="PRO_1000166521" description="ATP synthase subunit alpha">
    <location>
        <begin position="1"/>
        <end position="543"/>
    </location>
</feature>
<feature type="binding site" evidence="1">
    <location>
        <begin position="174"/>
        <end position="181"/>
    </location>
    <ligand>
        <name>ATP</name>
        <dbReference type="ChEBI" id="CHEBI:30616"/>
    </ligand>
</feature>
<feature type="site" description="Required for activity" evidence="1">
    <location>
        <position position="375"/>
    </location>
</feature>
<dbReference type="EC" id="7.1.2.2" evidence="1"/>
<dbReference type="EMBL" id="CP001095">
    <property type="protein sequence ID" value="ACJ51432.1"/>
    <property type="molecule type" value="Genomic_DNA"/>
</dbReference>
<dbReference type="EMBL" id="AP010889">
    <property type="protein sequence ID" value="BAJ67906.1"/>
    <property type="molecule type" value="Genomic_DNA"/>
</dbReference>
<dbReference type="RefSeq" id="WP_012576742.1">
    <property type="nucleotide sequence ID" value="NC_011593.1"/>
</dbReference>
<dbReference type="SMR" id="B7GTZ1"/>
<dbReference type="KEGG" id="bln:Blon_0307"/>
<dbReference type="KEGG" id="blon:BLIJ_0312"/>
<dbReference type="PATRIC" id="fig|391904.8.peg.315"/>
<dbReference type="HOGENOM" id="CLU_010091_2_1_11"/>
<dbReference type="Proteomes" id="UP000001360">
    <property type="component" value="Chromosome"/>
</dbReference>
<dbReference type="GO" id="GO:0005886">
    <property type="term" value="C:plasma membrane"/>
    <property type="evidence" value="ECO:0007669"/>
    <property type="project" value="UniProtKB-SubCell"/>
</dbReference>
<dbReference type="GO" id="GO:0045259">
    <property type="term" value="C:proton-transporting ATP synthase complex"/>
    <property type="evidence" value="ECO:0007669"/>
    <property type="project" value="UniProtKB-KW"/>
</dbReference>
<dbReference type="GO" id="GO:0043531">
    <property type="term" value="F:ADP binding"/>
    <property type="evidence" value="ECO:0007669"/>
    <property type="project" value="TreeGrafter"/>
</dbReference>
<dbReference type="GO" id="GO:0005524">
    <property type="term" value="F:ATP binding"/>
    <property type="evidence" value="ECO:0007669"/>
    <property type="project" value="UniProtKB-UniRule"/>
</dbReference>
<dbReference type="GO" id="GO:0046933">
    <property type="term" value="F:proton-transporting ATP synthase activity, rotational mechanism"/>
    <property type="evidence" value="ECO:0007669"/>
    <property type="project" value="UniProtKB-UniRule"/>
</dbReference>
<dbReference type="CDD" id="cd18113">
    <property type="entry name" value="ATP-synt_F1_alpha_C"/>
    <property type="match status" value="1"/>
</dbReference>
<dbReference type="CDD" id="cd18116">
    <property type="entry name" value="ATP-synt_F1_alpha_N"/>
    <property type="match status" value="1"/>
</dbReference>
<dbReference type="CDD" id="cd01132">
    <property type="entry name" value="F1-ATPase_alpha_CD"/>
    <property type="match status" value="1"/>
</dbReference>
<dbReference type="FunFam" id="1.20.150.20:FF:000001">
    <property type="entry name" value="ATP synthase subunit alpha"/>
    <property type="match status" value="1"/>
</dbReference>
<dbReference type="FunFam" id="3.40.50.300:FF:000002">
    <property type="entry name" value="ATP synthase subunit alpha"/>
    <property type="match status" value="1"/>
</dbReference>
<dbReference type="Gene3D" id="2.40.30.20">
    <property type="match status" value="1"/>
</dbReference>
<dbReference type="Gene3D" id="1.20.150.20">
    <property type="entry name" value="ATP synthase alpha/beta chain, C-terminal domain"/>
    <property type="match status" value="1"/>
</dbReference>
<dbReference type="Gene3D" id="3.40.50.300">
    <property type="entry name" value="P-loop containing nucleotide triphosphate hydrolases"/>
    <property type="match status" value="1"/>
</dbReference>
<dbReference type="HAMAP" id="MF_01346">
    <property type="entry name" value="ATP_synth_alpha_bact"/>
    <property type="match status" value="1"/>
</dbReference>
<dbReference type="InterPro" id="IPR023366">
    <property type="entry name" value="ATP_synth_asu-like_sf"/>
</dbReference>
<dbReference type="InterPro" id="IPR000793">
    <property type="entry name" value="ATP_synth_asu_C"/>
</dbReference>
<dbReference type="InterPro" id="IPR038376">
    <property type="entry name" value="ATP_synth_asu_C_sf"/>
</dbReference>
<dbReference type="InterPro" id="IPR033732">
    <property type="entry name" value="ATP_synth_F1_a_nt-bd_dom"/>
</dbReference>
<dbReference type="InterPro" id="IPR005294">
    <property type="entry name" value="ATP_synth_F1_asu"/>
</dbReference>
<dbReference type="InterPro" id="IPR020003">
    <property type="entry name" value="ATPase_a/bsu_AS"/>
</dbReference>
<dbReference type="InterPro" id="IPR004100">
    <property type="entry name" value="ATPase_F1/V1/A1_a/bsu_N"/>
</dbReference>
<dbReference type="InterPro" id="IPR036121">
    <property type="entry name" value="ATPase_F1/V1/A1_a/bsu_N_sf"/>
</dbReference>
<dbReference type="InterPro" id="IPR000194">
    <property type="entry name" value="ATPase_F1/V1/A1_a/bsu_nucl-bd"/>
</dbReference>
<dbReference type="InterPro" id="IPR027417">
    <property type="entry name" value="P-loop_NTPase"/>
</dbReference>
<dbReference type="NCBIfam" id="TIGR00962">
    <property type="entry name" value="atpA"/>
    <property type="match status" value="1"/>
</dbReference>
<dbReference type="NCBIfam" id="NF009884">
    <property type="entry name" value="PRK13343.1"/>
    <property type="match status" value="1"/>
</dbReference>
<dbReference type="PANTHER" id="PTHR48082">
    <property type="entry name" value="ATP SYNTHASE SUBUNIT ALPHA, MITOCHONDRIAL"/>
    <property type="match status" value="1"/>
</dbReference>
<dbReference type="PANTHER" id="PTHR48082:SF2">
    <property type="entry name" value="ATP SYNTHASE SUBUNIT ALPHA, MITOCHONDRIAL"/>
    <property type="match status" value="1"/>
</dbReference>
<dbReference type="Pfam" id="PF00006">
    <property type="entry name" value="ATP-synt_ab"/>
    <property type="match status" value="1"/>
</dbReference>
<dbReference type="Pfam" id="PF00306">
    <property type="entry name" value="ATP-synt_ab_C"/>
    <property type="match status" value="1"/>
</dbReference>
<dbReference type="Pfam" id="PF02874">
    <property type="entry name" value="ATP-synt_ab_N"/>
    <property type="match status" value="1"/>
</dbReference>
<dbReference type="SUPFAM" id="SSF47917">
    <property type="entry name" value="C-terminal domain of alpha and beta subunits of F1 ATP synthase"/>
    <property type="match status" value="1"/>
</dbReference>
<dbReference type="SUPFAM" id="SSF50615">
    <property type="entry name" value="N-terminal domain of alpha and beta subunits of F1 ATP synthase"/>
    <property type="match status" value="1"/>
</dbReference>
<dbReference type="SUPFAM" id="SSF52540">
    <property type="entry name" value="P-loop containing nucleoside triphosphate hydrolases"/>
    <property type="match status" value="1"/>
</dbReference>
<dbReference type="PROSITE" id="PS00152">
    <property type="entry name" value="ATPASE_ALPHA_BETA"/>
    <property type="match status" value="1"/>
</dbReference>
<comment type="function">
    <text evidence="1">Produces ATP from ADP in the presence of a proton gradient across the membrane. The alpha chain is a regulatory subunit.</text>
</comment>
<comment type="catalytic activity">
    <reaction evidence="1">
        <text>ATP + H2O + 4 H(+)(in) = ADP + phosphate + 5 H(+)(out)</text>
        <dbReference type="Rhea" id="RHEA:57720"/>
        <dbReference type="ChEBI" id="CHEBI:15377"/>
        <dbReference type="ChEBI" id="CHEBI:15378"/>
        <dbReference type="ChEBI" id="CHEBI:30616"/>
        <dbReference type="ChEBI" id="CHEBI:43474"/>
        <dbReference type="ChEBI" id="CHEBI:456216"/>
        <dbReference type="EC" id="7.1.2.2"/>
    </reaction>
</comment>
<comment type="subunit">
    <text evidence="1">F-type ATPases have 2 components, CF(1) - the catalytic core - and CF(0) - the membrane proton channel. CF(1) has five subunits: alpha(3), beta(3), gamma(1), delta(1), epsilon(1). CF(0) has three main subunits: a(1), b(2) and c(9-12). The alpha and beta chains form an alternating ring which encloses part of the gamma chain. CF(1) is attached to CF(0) by a central stalk formed by the gamma and epsilon chains, while a peripheral stalk is formed by the delta and b chains.</text>
</comment>
<comment type="subcellular location">
    <subcellularLocation>
        <location evidence="1">Cell membrane</location>
        <topology evidence="1">Peripheral membrane protein</topology>
    </subcellularLocation>
</comment>
<comment type="similarity">
    <text evidence="1">Belongs to the ATPase alpha/beta chains family.</text>
</comment>
<name>ATPA_BIFLS</name>